<dbReference type="EMBL" id="X58519">
    <property type="protein sequence ID" value="CAA41409.1"/>
    <property type="molecule type" value="mRNA"/>
</dbReference>
<dbReference type="PIR" id="S16516">
    <property type="entry name" value="S16516"/>
</dbReference>
<dbReference type="RefSeq" id="NP_990619.1">
    <property type="nucleotide sequence ID" value="NM_205288.2"/>
</dbReference>
<dbReference type="SMR" id="P26009"/>
<dbReference type="FunCoup" id="P26009">
    <property type="interactions" value="211"/>
</dbReference>
<dbReference type="STRING" id="9031.ENSGALP00000065785"/>
<dbReference type="GlyCosmos" id="P26009">
    <property type="glycosylation" value="17 sites, No reported glycans"/>
</dbReference>
<dbReference type="GlyGen" id="P26009">
    <property type="glycosylation" value="17 sites"/>
</dbReference>
<dbReference type="PaxDb" id="9031-ENSGALP00000014220"/>
<dbReference type="GeneID" id="396225"/>
<dbReference type="KEGG" id="gga:396225"/>
<dbReference type="CTD" id="8516"/>
<dbReference type="VEuPathDB" id="HostDB:geneid_396225"/>
<dbReference type="eggNOG" id="KOG3637">
    <property type="taxonomic scope" value="Eukaryota"/>
</dbReference>
<dbReference type="InParanoid" id="P26009"/>
<dbReference type="OrthoDB" id="5317514at2759"/>
<dbReference type="PhylomeDB" id="P26009"/>
<dbReference type="PRO" id="PR:P26009"/>
<dbReference type="Proteomes" id="UP000000539">
    <property type="component" value="Unassembled WGS sequence"/>
</dbReference>
<dbReference type="GO" id="GO:0009897">
    <property type="term" value="C:external side of plasma membrane"/>
    <property type="evidence" value="ECO:0000318"/>
    <property type="project" value="GO_Central"/>
</dbReference>
<dbReference type="GO" id="GO:0008305">
    <property type="term" value="C:integrin complex"/>
    <property type="evidence" value="ECO:0000318"/>
    <property type="project" value="GO_Central"/>
</dbReference>
<dbReference type="GO" id="GO:0005178">
    <property type="term" value="F:integrin binding"/>
    <property type="evidence" value="ECO:0000318"/>
    <property type="project" value="GO_Central"/>
</dbReference>
<dbReference type="GO" id="GO:0046872">
    <property type="term" value="F:metal ion binding"/>
    <property type="evidence" value="ECO:0007669"/>
    <property type="project" value="UniProtKB-KW"/>
</dbReference>
<dbReference type="GO" id="GO:0033627">
    <property type="term" value="P:cell adhesion mediated by integrin"/>
    <property type="evidence" value="ECO:0000318"/>
    <property type="project" value="GO_Central"/>
</dbReference>
<dbReference type="GO" id="GO:0030154">
    <property type="term" value="P:cell differentiation"/>
    <property type="evidence" value="ECO:0007669"/>
    <property type="project" value="UniProtKB-KW"/>
</dbReference>
<dbReference type="GO" id="GO:0098609">
    <property type="term" value="P:cell-cell adhesion"/>
    <property type="evidence" value="ECO:0000318"/>
    <property type="project" value="GO_Central"/>
</dbReference>
<dbReference type="GO" id="GO:0007229">
    <property type="term" value="P:integrin-mediated signaling pathway"/>
    <property type="evidence" value="ECO:0000318"/>
    <property type="project" value="GO_Central"/>
</dbReference>
<dbReference type="GO" id="GO:0007399">
    <property type="term" value="P:nervous system development"/>
    <property type="evidence" value="ECO:0007669"/>
    <property type="project" value="UniProtKB-KW"/>
</dbReference>
<dbReference type="FunFam" id="2.130.10.130:FF:000003">
    <property type="entry name" value="Integrin alpha V"/>
    <property type="match status" value="1"/>
</dbReference>
<dbReference type="FunFam" id="2.60.40.1510:FF:000001">
    <property type="entry name" value="Integrin alpha V"/>
    <property type="match status" value="1"/>
</dbReference>
<dbReference type="FunFam" id="1.20.5.930:FF:000001">
    <property type="entry name" value="Integrin subunit alpha V"/>
    <property type="match status" value="1"/>
</dbReference>
<dbReference type="FunFam" id="2.60.40.1460:FF:000001">
    <property type="entry name" value="Integrin, alpha V"/>
    <property type="match status" value="1"/>
</dbReference>
<dbReference type="Gene3D" id="1.20.5.930">
    <property type="entry name" value="Bicelle-embedded integrin alpha(iib) transmembrane segment"/>
    <property type="match status" value="1"/>
</dbReference>
<dbReference type="Gene3D" id="2.130.10.130">
    <property type="entry name" value="Integrin alpha, N-terminal"/>
    <property type="match status" value="1"/>
</dbReference>
<dbReference type="Gene3D" id="2.60.40.1460">
    <property type="entry name" value="Integrin domains. Chain A, domain 2"/>
    <property type="match status" value="1"/>
</dbReference>
<dbReference type="Gene3D" id="2.60.40.1510">
    <property type="entry name" value="ntegrin, alpha v. Chain A, domain 3"/>
    <property type="match status" value="1"/>
</dbReference>
<dbReference type="Gene3D" id="2.60.40.1530">
    <property type="entry name" value="ntegrin, alpha v. Chain A, domain 4"/>
    <property type="match status" value="1"/>
</dbReference>
<dbReference type="InterPro" id="IPR013517">
    <property type="entry name" value="FG-GAP"/>
</dbReference>
<dbReference type="InterPro" id="IPR013519">
    <property type="entry name" value="Int_alpha_beta-p"/>
</dbReference>
<dbReference type="InterPro" id="IPR000413">
    <property type="entry name" value="Integrin_alpha"/>
</dbReference>
<dbReference type="InterPro" id="IPR018184">
    <property type="entry name" value="Integrin_alpha_C_CS"/>
</dbReference>
<dbReference type="InterPro" id="IPR013649">
    <property type="entry name" value="Integrin_alpha_Ig-like_1"/>
</dbReference>
<dbReference type="InterPro" id="IPR048285">
    <property type="entry name" value="Integrin_alpha_Ig-like_2"/>
</dbReference>
<dbReference type="InterPro" id="IPR048286">
    <property type="entry name" value="Integrin_alpha_Ig-like_3"/>
</dbReference>
<dbReference type="InterPro" id="IPR028994">
    <property type="entry name" value="Integrin_alpha_N"/>
</dbReference>
<dbReference type="InterPro" id="IPR032695">
    <property type="entry name" value="Integrin_dom_sf"/>
</dbReference>
<dbReference type="PANTHER" id="PTHR23220">
    <property type="entry name" value="INTEGRIN ALPHA"/>
    <property type="match status" value="1"/>
</dbReference>
<dbReference type="PANTHER" id="PTHR23220:SF5">
    <property type="entry name" value="INTEGRIN ALPHA-8"/>
    <property type="match status" value="1"/>
</dbReference>
<dbReference type="Pfam" id="PF01839">
    <property type="entry name" value="FG-GAP"/>
    <property type="match status" value="3"/>
</dbReference>
<dbReference type="Pfam" id="PF08441">
    <property type="entry name" value="Integrin_A_Ig_1"/>
    <property type="match status" value="1"/>
</dbReference>
<dbReference type="Pfam" id="PF20805">
    <property type="entry name" value="Integrin_A_Ig_2"/>
    <property type="match status" value="1"/>
</dbReference>
<dbReference type="Pfam" id="PF20806">
    <property type="entry name" value="Integrin_A_Ig_3"/>
    <property type="match status" value="1"/>
</dbReference>
<dbReference type="Pfam" id="PF00357">
    <property type="entry name" value="Integrin_alpha"/>
    <property type="match status" value="1"/>
</dbReference>
<dbReference type="PRINTS" id="PR01185">
    <property type="entry name" value="INTEGRINA"/>
</dbReference>
<dbReference type="SMART" id="SM00191">
    <property type="entry name" value="Int_alpha"/>
    <property type="match status" value="6"/>
</dbReference>
<dbReference type="SUPFAM" id="SSF69318">
    <property type="entry name" value="Integrin alpha N-terminal domain"/>
    <property type="match status" value="1"/>
</dbReference>
<dbReference type="SUPFAM" id="SSF69179">
    <property type="entry name" value="Integrin domains"/>
    <property type="match status" value="3"/>
</dbReference>
<dbReference type="PROSITE" id="PS51470">
    <property type="entry name" value="FG_GAP"/>
    <property type="match status" value="7"/>
</dbReference>
<dbReference type="PROSITE" id="PS00242">
    <property type="entry name" value="INTEGRIN_ALPHA"/>
    <property type="match status" value="1"/>
</dbReference>
<gene>
    <name type="primary">ITGA8</name>
</gene>
<feature type="signal peptide" evidence="3">
    <location>
        <begin position="1"/>
        <end position="23"/>
    </location>
</feature>
<feature type="chain" id="PRO_0000016313" description="Integrin alpha-8">
    <location>
        <begin position="24"/>
        <end position="1044"/>
    </location>
</feature>
<feature type="chain" id="PRO_0000016314" description="Integrin alpha-8 heavy chain" evidence="3">
    <location>
        <begin position="24"/>
        <end position="887"/>
    </location>
</feature>
<feature type="chain" id="PRO_0000016315" description="Integrin alpha-8 light chain" evidence="3">
    <location>
        <begin position="888"/>
        <end position="1044"/>
    </location>
</feature>
<feature type="topological domain" description="Extracellular" evidence="3">
    <location>
        <begin position="24"/>
        <end position="991"/>
    </location>
</feature>
<feature type="transmembrane region" description="Helical" evidence="3">
    <location>
        <begin position="992"/>
        <end position="1015"/>
    </location>
</feature>
<feature type="topological domain" description="Cytoplasmic" evidence="3">
    <location>
        <begin position="1016"/>
        <end position="1044"/>
    </location>
</feature>
<feature type="repeat" description="FG-GAP 1" evidence="4">
    <location>
        <begin position="28"/>
        <end position="90"/>
    </location>
</feature>
<feature type="repeat" description="FG-GAP 2" evidence="4">
    <location>
        <begin position="104"/>
        <end position="165"/>
    </location>
</feature>
<feature type="repeat" description="FG-GAP 3" evidence="4">
    <location>
        <begin position="170"/>
        <end position="222"/>
    </location>
</feature>
<feature type="repeat" description="FG-GAP 4" evidence="4">
    <location>
        <begin position="236"/>
        <end position="288"/>
    </location>
</feature>
<feature type="repeat" description="FG-GAP 5" evidence="4">
    <location>
        <begin position="289"/>
        <end position="354"/>
    </location>
</feature>
<feature type="repeat" description="FG-GAP 6" evidence="4">
    <location>
        <begin position="355"/>
        <end position="413"/>
    </location>
</feature>
<feature type="repeat" description="FG-GAP 7" evidence="4">
    <location>
        <begin position="417"/>
        <end position="480"/>
    </location>
</feature>
<feature type="short sequence motif" description="Cell attachment site" evidence="3">
    <location>
        <begin position="437"/>
        <end position="439"/>
    </location>
</feature>
<feature type="binding site" evidence="2">
    <location>
        <position position="257"/>
    </location>
    <ligand>
        <name>Ca(2+)</name>
        <dbReference type="ChEBI" id="CHEBI:29108"/>
        <label>1</label>
    </ligand>
</feature>
<feature type="binding site" evidence="2">
    <location>
        <position position="259"/>
    </location>
    <ligand>
        <name>Ca(2+)</name>
        <dbReference type="ChEBI" id="CHEBI:29108"/>
        <label>1</label>
    </ligand>
</feature>
<feature type="binding site" evidence="2">
    <location>
        <position position="261"/>
    </location>
    <ligand>
        <name>Ca(2+)</name>
        <dbReference type="ChEBI" id="CHEBI:29108"/>
        <label>1</label>
    </ligand>
</feature>
<feature type="binding site" evidence="2">
    <location>
        <position position="265"/>
    </location>
    <ligand>
        <name>Ca(2+)</name>
        <dbReference type="ChEBI" id="CHEBI:29108"/>
        <label>1</label>
    </ligand>
</feature>
<feature type="binding site" evidence="2">
    <location>
        <position position="311"/>
    </location>
    <ligand>
        <name>Ca(2+)</name>
        <dbReference type="ChEBI" id="CHEBI:29108"/>
        <label>2</label>
    </ligand>
</feature>
<feature type="binding site" evidence="2">
    <location>
        <position position="313"/>
    </location>
    <ligand>
        <name>Ca(2+)</name>
        <dbReference type="ChEBI" id="CHEBI:29108"/>
        <label>2</label>
    </ligand>
</feature>
<feature type="binding site" evidence="2">
    <location>
        <position position="315"/>
    </location>
    <ligand>
        <name>Ca(2+)</name>
        <dbReference type="ChEBI" id="CHEBI:29108"/>
        <label>2</label>
    </ligand>
</feature>
<feature type="binding site" evidence="2">
    <location>
        <position position="317"/>
    </location>
    <ligand>
        <name>Ca(2+)</name>
        <dbReference type="ChEBI" id="CHEBI:29108"/>
        <label>2</label>
    </ligand>
</feature>
<feature type="binding site" evidence="2">
    <location>
        <position position="319"/>
    </location>
    <ligand>
        <name>Ca(2+)</name>
        <dbReference type="ChEBI" id="CHEBI:29108"/>
        <label>2</label>
    </ligand>
</feature>
<feature type="binding site" evidence="2">
    <location>
        <position position="377"/>
    </location>
    <ligand>
        <name>Ca(2+)</name>
        <dbReference type="ChEBI" id="CHEBI:29108"/>
        <label>3</label>
    </ligand>
</feature>
<feature type="binding site" evidence="2">
    <location>
        <position position="379"/>
    </location>
    <ligand>
        <name>Ca(2+)</name>
        <dbReference type="ChEBI" id="CHEBI:29108"/>
        <label>3</label>
    </ligand>
</feature>
<feature type="binding site" evidence="2">
    <location>
        <position position="381"/>
    </location>
    <ligand>
        <name>Ca(2+)</name>
        <dbReference type="ChEBI" id="CHEBI:29108"/>
        <label>3</label>
    </ligand>
</feature>
<feature type="binding site" evidence="2">
    <location>
        <position position="383"/>
    </location>
    <ligand>
        <name>Ca(2+)</name>
        <dbReference type="ChEBI" id="CHEBI:29108"/>
        <label>3</label>
    </ligand>
</feature>
<feature type="binding site" evidence="2">
    <location>
        <position position="385"/>
    </location>
    <ligand>
        <name>Ca(2+)</name>
        <dbReference type="ChEBI" id="CHEBI:29108"/>
        <label>3</label>
    </ligand>
</feature>
<feature type="binding site" evidence="2">
    <location>
        <position position="441"/>
    </location>
    <ligand>
        <name>Ca(2+)</name>
        <dbReference type="ChEBI" id="CHEBI:29108"/>
        <label>4</label>
    </ligand>
</feature>
<feature type="binding site" evidence="2">
    <location>
        <position position="443"/>
    </location>
    <ligand>
        <name>Ca(2+)</name>
        <dbReference type="ChEBI" id="CHEBI:29108"/>
        <label>4</label>
    </ligand>
</feature>
<feature type="binding site" evidence="2">
    <location>
        <position position="445"/>
    </location>
    <ligand>
        <name>Ca(2+)</name>
        <dbReference type="ChEBI" id="CHEBI:29108"/>
        <label>4</label>
    </ligand>
</feature>
<feature type="binding site" evidence="2">
    <location>
        <position position="447"/>
    </location>
    <ligand>
        <name>Ca(2+)</name>
        <dbReference type="ChEBI" id="CHEBI:29108"/>
        <label>4</label>
    </ligand>
</feature>
<feature type="binding site" evidence="2">
    <location>
        <position position="449"/>
    </location>
    <ligand>
        <name>Ca(2+)</name>
        <dbReference type="ChEBI" id="CHEBI:29108"/>
        <label>4</label>
    </ligand>
</feature>
<feature type="glycosylation site" description="N-linked (GlcNAc...) asparagine" evidence="3">
    <location>
        <position position="66"/>
    </location>
</feature>
<feature type="glycosylation site" description="N-linked (GlcNAc...) asparagine" evidence="3">
    <location>
        <position position="104"/>
    </location>
</feature>
<feature type="glycosylation site" description="N-linked (GlcNAc...) asparagine" evidence="3">
    <location>
        <position position="159"/>
    </location>
</feature>
<feature type="glycosylation site" description="N-linked (GlcNAc...) asparagine" evidence="3">
    <location>
        <position position="221"/>
    </location>
</feature>
<feature type="glycosylation site" description="N-linked (GlcNAc...) asparagine" evidence="3">
    <location>
        <position position="284"/>
    </location>
</feature>
<feature type="glycosylation site" description="N-linked (GlcNAc...) asparagine" evidence="3">
    <location>
        <position position="293"/>
    </location>
</feature>
<feature type="glycosylation site" description="N-linked (GlcNAc...) asparagine" evidence="3">
    <location>
        <position position="486"/>
    </location>
</feature>
<feature type="glycosylation site" description="N-linked (GlcNAc...) asparagine" evidence="3">
    <location>
        <position position="587"/>
    </location>
</feature>
<feature type="glycosylation site" description="N-linked (GlcNAc...) asparagine" evidence="3">
    <location>
        <position position="701"/>
    </location>
</feature>
<feature type="glycosylation site" description="N-linked (GlcNAc...) asparagine" evidence="3">
    <location>
        <position position="719"/>
    </location>
</feature>
<feature type="glycosylation site" description="N-linked (GlcNAc...) asparagine" evidence="3">
    <location>
        <position position="751"/>
    </location>
</feature>
<feature type="glycosylation site" description="N-linked (GlcNAc...) asparagine" evidence="3">
    <location>
        <position position="762"/>
    </location>
</feature>
<feature type="glycosylation site" description="N-linked (GlcNAc...) asparagine" evidence="3">
    <location>
        <position position="818"/>
    </location>
</feature>
<feature type="glycosylation site" description="N-linked (GlcNAc...) asparagine" evidence="3">
    <location>
        <position position="877"/>
    </location>
</feature>
<feature type="glycosylation site" description="N-linked (GlcNAc...) asparagine" evidence="3">
    <location>
        <position position="904"/>
    </location>
</feature>
<feature type="glycosylation site" description="N-linked (GlcNAc...) asparagine" evidence="3">
    <location>
        <position position="952"/>
    </location>
</feature>
<feature type="glycosylation site" description="N-linked (GlcNAc...) asparagine" evidence="3">
    <location>
        <position position="986"/>
    </location>
</feature>
<feature type="disulfide bond" evidence="1">
    <location>
        <begin position="81"/>
        <end position="88"/>
    </location>
</feature>
<feature type="disulfide bond" evidence="1">
    <location>
        <begin position="132"/>
        <end position="153"/>
    </location>
</feature>
<feature type="disulfide bond" evidence="1">
    <location>
        <begin position="169"/>
        <end position="182"/>
    </location>
</feature>
<feature type="disulfide bond" evidence="1">
    <location>
        <begin position="489"/>
        <end position="500"/>
    </location>
</feature>
<feature type="disulfide bond" evidence="1">
    <location>
        <begin position="506"/>
        <end position="562"/>
    </location>
</feature>
<feature type="disulfide bond" evidence="1">
    <location>
        <begin position="623"/>
        <end position="629"/>
    </location>
</feature>
<feature type="disulfide bond" evidence="1">
    <location>
        <begin position="695"/>
        <end position="708"/>
    </location>
</feature>
<feature type="disulfide bond" description="Interchain (between heavy and light chains)" evidence="1">
    <location>
        <begin position="849"/>
        <end position="905"/>
    </location>
</feature>
<feature type="disulfide bond" evidence="1">
    <location>
        <begin position="910"/>
        <end position="915"/>
    </location>
</feature>
<name>ITA8_CHICK</name>
<accession>P26009</accession>
<keyword id="KW-0106">Calcium</keyword>
<keyword id="KW-0130">Cell adhesion</keyword>
<keyword id="KW-1003">Cell membrane</keyword>
<keyword id="KW-0165">Cleavage on pair of basic residues</keyword>
<keyword id="KW-0217">Developmental protein</keyword>
<keyword id="KW-0221">Differentiation</keyword>
<keyword id="KW-1015">Disulfide bond</keyword>
<keyword id="KW-0325">Glycoprotein</keyword>
<keyword id="KW-0401">Integrin</keyword>
<keyword id="KW-0472">Membrane</keyword>
<keyword id="KW-0479">Metal-binding</keyword>
<keyword id="KW-0524">Neurogenesis</keyword>
<keyword id="KW-0675">Receptor</keyword>
<keyword id="KW-1185">Reference proteome</keyword>
<keyword id="KW-0677">Repeat</keyword>
<keyword id="KW-0732">Signal</keyword>
<keyword id="KW-0812">Transmembrane</keyword>
<keyword id="KW-1133">Transmembrane helix</keyword>
<organism>
    <name type="scientific">Gallus gallus</name>
    <name type="common">Chicken</name>
    <dbReference type="NCBI Taxonomy" id="9031"/>
    <lineage>
        <taxon>Eukaryota</taxon>
        <taxon>Metazoa</taxon>
        <taxon>Chordata</taxon>
        <taxon>Craniata</taxon>
        <taxon>Vertebrata</taxon>
        <taxon>Euteleostomi</taxon>
        <taxon>Archelosauria</taxon>
        <taxon>Archosauria</taxon>
        <taxon>Dinosauria</taxon>
        <taxon>Saurischia</taxon>
        <taxon>Theropoda</taxon>
        <taxon>Coelurosauria</taxon>
        <taxon>Aves</taxon>
        <taxon>Neognathae</taxon>
        <taxon>Galloanserae</taxon>
        <taxon>Galliformes</taxon>
        <taxon>Phasianidae</taxon>
        <taxon>Phasianinae</taxon>
        <taxon>Gallus</taxon>
    </lineage>
</organism>
<evidence type="ECO:0000250" key="1"/>
<evidence type="ECO:0000250" key="2">
    <source>
        <dbReference type="UniProtKB" id="P08648"/>
    </source>
</evidence>
<evidence type="ECO:0000255" key="3"/>
<evidence type="ECO:0000255" key="4">
    <source>
        <dbReference type="PROSITE-ProRule" id="PRU00803"/>
    </source>
</evidence>
<evidence type="ECO:0000269" key="5">
    <source>
    </source>
</evidence>
<evidence type="ECO:0000269" key="6">
    <source>
    </source>
</evidence>
<evidence type="ECO:0000269" key="7">
    <source>
    </source>
</evidence>
<evidence type="ECO:0000305" key="8"/>
<comment type="function">
    <text evidence="1 5 6 7">Integrin alpha-8/beta-1 functions in the genesis of kidney and probably of other organs by regulating the recruitment of mesenchymal cells into epithelial structures. It recognizes the sequence R-G-D in a wide array of ligands including TNC, FN1, SPP1, TGFB1, TGFB3 and VTN. NPNT is probably its functional ligand in kidney genesis (By similarity). Neuronal receptor for TNC it mediates cell-cell interactions and regulates neurite outgrowth of sensory and motor neurons.</text>
</comment>
<comment type="subunit">
    <text>Heterodimer of an alpha and a beta subunit. The alpha subunit is composed of a heavy and a light chain linked by a disulfide bond. Alpha-8 associates with beta-1.</text>
</comment>
<comment type="subcellular location">
    <subcellularLocation>
        <location>Membrane</location>
        <topology>Single-pass type I membrane protein</topology>
    </subcellularLocation>
    <subcellularLocation>
        <location evidence="1">Cell membrane</location>
    </subcellularLocation>
</comment>
<comment type="tissue specificity">
    <text>Prominently expressed on axons and on cells in contact with basal laminae in embryos.</text>
</comment>
<comment type="developmental stage">
    <text evidence="7">Expressed in developing tectum (at protein level).</text>
</comment>
<comment type="similarity">
    <text evidence="8">Belongs to the integrin alpha chain family.</text>
</comment>
<sequence>MPRRQPPRPLLLLSALLCAPASAFNLDEEKLTVYSGPPGSYFGYSVDFYIPDPSTVSVLVGAPRANTTQPDIVEGGAVYHCGWPAARCRQIPFDNTNNRKIKVNGTREPIEFKTNQWFGATVKAHKEKVVACAPLYHWRTLKDSPEKDPVGTCYVAIQNFSAYAEYSPCRNSNADPEGQGFCQAGFSLDFYKNGDLIVGGPGSFYWQGQVITASIADIITNYSFKDILRKLAHEKQTGVAPPTYDDNYMGYSVAAGEFTGDSEEELVAGVPRGAQNFGYVSIINSSDLTFIQNFTGEQMASYFGYTVAVSDVNNDGLDDILVGAPLFMEREFESKPKEVGQVYLYLQESAFLFRDPQILTGTEVFGRFGSAITHLGDLNQDGYNDIAVGAPFAGEDRRGKVLIYNGYSNGLKTDPSQVLNGAWASQSMPSGFGFTLRGDSDVDKNDYPDLIVGAFGAGKAVVYRARPVVTVNALLILNPMIVNPDNKTCQPPGSPLFVACFTVRVCAAFEGQSISDEIVLKGELQLDSLKQKGAVKRTLFFDYHQSHHYFSIVMERQKKLYCQDFLVYLRDETEFRDKLSPININLNYSLDESHFKDSLLVKPILNYYQRPSVTEQAYILVDCGEDNLCIPDLHLSAVPDKDQLIIGEENCVMLIINPRNDGEGAYEAELHIKIPPEADYTGVERNNKALRVLSCDYKMENETRMVVCDLGNPMVAGANFSTGIRFSVQHFENSDFSINFELQIKSSNKINSTSNLVNLHINITAAAQVQVRGVSHPPQIILPLHNWEPKDEPTKEEEIGPLVEHIYELHNIGPSAINNTVLHVGWPVSSGEEFLLYILHIQTHGPLHCQTSSPINIMQINFAIPQDTPELAAFLYNSTISHYIRRREVAVAEPYRRNSAKILNCTNVKCILISCNVGQLERGKSAALKIRSRLWAETFLQRKNDPYTLSSNVSFKVKNMPYKVQPAKLPEGSIAIRTSVIWSTPNVSFVIPLWVIILAIMLGLLVLAVLTLALWKCGFFDRARPPQDDMADREQLTNNKTTDA</sequence>
<reference key="1">
    <citation type="journal article" date="1991" name="EMBO J.">
        <title>Characterization of the integrin alpha 8 subunit: a new integrin beta 1-associated subunit, which is prominently expressed on axons and on cells in contact with basal laminae in chick embryos.</title>
        <authorList>
            <person name="Bossy B."/>
            <person name="Bossy-Wetzel E."/>
            <person name="Reichardt L.F."/>
        </authorList>
    </citation>
    <scope>NUCLEOTIDE SEQUENCE [MRNA]</scope>
    <scope>FUNCTION</scope>
    <source>
        <tissue>Brain</tissue>
    </source>
</reference>
<reference key="2">
    <citation type="journal article" date="1995" name="Neuron">
        <title>The integrin receptor alpha 8 beta 1 mediates interactions of embryonic chick motor and sensory neurons with tenascin-C.</title>
        <authorList>
            <person name="Varnum-Finney B."/>
            <person name="Venstrom K."/>
            <person name="Mueller U."/>
            <person name="Kypta R."/>
            <person name="Backus C."/>
            <person name="Chiquet M."/>
            <person name="Reichardt L.F."/>
        </authorList>
    </citation>
    <scope>FUNCTION</scope>
</reference>
<reference key="3">
    <citation type="journal article" date="1998" name="J. Neurosci.">
        <title>Retroviral transfer of antisense integrin alpha6 or alpha8 sequences results in laminar redistribution or clonal cell death in developing brain.</title>
        <authorList>
            <person name="Zhang Z."/>
            <person name="Galileo D.S."/>
        </authorList>
    </citation>
    <scope>FUNCTION</scope>
    <scope>DEVELOPMENTAL STAGE</scope>
</reference>
<protein>
    <recommendedName>
        <fullName>Integrin alpha-8</fullName>
    </recommendedName>
    <component>
        <recommendedName>
            <fullName>Integrin alpha-8 heavy chain</fullName>
        </recommendedName>
    </component>
    <component>
        <recommendedName>
            <fullName>Integrin alpha-8 light chain</fullName>
        </recommendedName>
    </component>
</protein>
<proteinExistence type="evidence at protein level"/>